<organism>
    <name type="scientific">Arthrobacter globiformis</name>
    <dbReference type="NCBI Taxonomy" id="1665"/>
    <lineage>
        <taxon>Bacteria</taxon>
        <taxon>Bacillati</taxon>
        <taxon>Actinomycetota</taxon>
        <taxon>Actinomycetes</taxon>
        <taxon>Micrococcales</taxon>
        <taxon>Micrococcaceae</taxon>
        <taxon>Arthrobacter</taxon>
    </lineage>
</organism>
<feature type="chain" id="PRO_0000428956" description="Dimethylglycine oxidase">
    <location>
        <begin position="1"/>
        <end position="830"/>
    </location>
</feature>
<feature type="active site" evidence="1">
    <location>
        <position position="225"/>
    </location>
</feature>
<feature type="active site" evidence="1">
    <location>
        <position position="259"/>
    </location>
</feature>
<feature type="active site" description="For 5,10-methylenetetrahydrofolate synthesis activity" evidence="1">
    <location>
        <position position="552"/>
    </location>
</feature>
<feature type="binding site" evidence="4 5">
    <location>
        <begin position="14"/>
        <end position="15"/>
    </location>
    <ligand>
        <name>FAD</name>
        <dbReference type="ChEBI" id="CHEBI:57692"/>
    </ligand>
</feature>
<feature type="binding site" evidence="4 5">
    <location>
        <begin position="35"/>
        <end position="36"/>
    </location>
    <ligand>
        <name>FAD</name>
        <dbReference type="ChEBI" id="CHEBI:57692"/>
    </ligand>
</feature>
<feature type="binding site" evidence="4 5">
    <location>
        <begin position="45"/>
        <end position="48"/>
    </location>
    <ligand>
        <name>FAD</name>
        <dbReference type="ChEBI" id="CHEBI:57692"/>
    </ligand>
</feature>
<feature type="binding site" evidence="4 5">
    <location>
        <position position="52"/>
    </location>
    <ligand>
        <name>FAD</name>
        <dbReference type="ChEBI" id="CHEBI:57692"/>
    </ligand>
</feature>
<feature type="binding site" evidence="4 5">
    <location>
        <position position="174"/>
    </location>
    <ligand>
        <name>FAD</name>
        <dbReference type="ChEBI" id="CHEBI:57692"/>
    </ligand>
</feature>
<feature type="binding site" evidence="4 5">
    <location>
        <position position="259"/>
    </location>
    <ligand>
        <name>FAD</name>
        <dbReference type="ChEBI" id="CHEBI:57692"/>
    </ligand>
</feature>
<feature type="binding site" evidence="4 5">
    <location>
        <begin position="360"/>
        <end position="363"/>
    </location>
    <ligand>
        <name>FAD</name>
        <dbReference type="ChEBI" id="CHEBI:57692"/>
    </ligand>
</feature>
<feature type="binding site" evidence="5">
    <location>
        <position position="539"/>
    </location>
    <ligand>
        <name>(6S)-5,6,7,8-tetrahydrofolate</name>
        <dbReference type="ChEBI" id="CHEBI:57453"/>
    </ligand>
</feature>
<feature type="binding site">
    <location>
        <position position="554"/>
    </location>
    <ligand>
        <name>(6S)-5,6,7,8-tetrahydrofolate</name>
        <dbReference type="ChEBI" id="CHEBI:57453"/>
    </ligand>
</feature>
<feature type="binding site">
    <location>
        <position position="566"/>
    </location>
    <ligand>
        <name>(6S)-5,6,7,8-tetrahydrofolate</name>
        <dbReference type="ChEBI" id="CHEBI:57453"/>
    </ligand>
</feature>
<feature type="binding site">
    <location>
        <begin position="658"/>
        <end position="660"/>
    </location>
    <ligand>
        <name>(6S)-5,6,7,8-tetrahydrofolate</name>
        <dbReference type="ChEBI" id="CHEBI:57453"/>
    </ligand>
</feature>
<feature type="site" description="Important for catalytic activity" evidence="4">
    <location>
        <position position="225"/>
    </location>
</feature>
<feature type="site" description="Important for catalytic activity" evidence="4">
    <location>
        <position position="259"/>
    </location>
</feature>
<feature type="site" description="Important for catalytic activity" evidence="5 7">
    <location>
        <position position="552"/>
    </location>
</feature>
<feature type="modified residue" description="Pros-8alpha-FAD histidine">
    <location>
        <position position="48"/>
    </location>
</feature>
<feature type="mutagenesis site" description="Reduces catalytic efficiency 3-fold and substrate affinity 30-fold." evidence="4">
    <original>H</original>
    <variation>Q</variation>
    <location>
        <position position="225"/>
    </location>
</feature>
<feature type="mutagenesis site" description="Reduces catalytic efficiency 225-fold and substrate affinity 25-fold." evidence="4">
    <original>Y</original>
    <variation>F</variation>
    <location>
        <position position="259"/>
    </location>
</feature>
<feature type="mutagenesis site" description="No effect on the activity." evidence="5">
    <original>D</original>
    <variation>A</variation>
    <location>
        <position position="552"/>
    </location>
</feature>
<feature type="mutagenesis site" description="Reduces activity 3-fold." evidence="5">
    <original>D</original>
    <variation>N</variation>
    <location>
        <position position="552"/>
    </location>
</feature>
<feature type="strand" evidence="8">
    <location>
        <begin position="7"/>
        <end position="10"/>
    </location>
</feature>
<feature type="helix" evidence="8">
    <location>
        <begin position="14"/>
        <end position="25"/>
    </location>
</feature>
<feature type="strand" evidence="8">
    <location>
        <begin position="31"/>
        <end position="34"/>
    </location>
</feature>
<feature type="helix" evidence="8">
    <location>
        <begin position="45"/>
        <end position="47"/>
    </location>
</feature>
<feature type="helix" evidence="8">
    <location>
        <begin position="60"/>
        <end position="75"/>
    </location>
</feature>
<feature type="strand" evidence="8">
    <location>
        <begin position="81"/>
        <end position="85"/>
    </location>
</feature>
<feature type="strand" evidence="8">
    <location>
        <begin position="89"/>
        <end position="95"/>
    </location>
</feature>
<feature type="helix" evidence="8">
    <location>
        <begin position="96"/>
        <end position="112"/>
    </location>
</feature>
<feature type="strand" evidence="8">
    <location>
        <begin position="117"/>
        <end position="119"/>
    </location>
</feature>
<feature type="helix" evidence="8">
    <location>
        <begin position="121"/>
        <end position="127"/>
    </location>
</feature>
<feature type="helix" evidence="8">
    <location>
        <begin position="133"/>
        <end position="135"/>
    </location>
</feature>
<feature type="strand" evidence="8">
    <location>
        <begin position="138"/>
        <end position="142"/>
    </location>
</feature>
<feature type="strand" evidence="8">
    <location>
        <begin position="146"/>
        <end position="148"/>
    </location>
</feature>
<feature type="helix" evidence="8">
    <location>
        <begin position="150"/>
        <end position="163"/>
    </location>
</feature>
<feature type="strand" evidence="8">
    <location>
        <begin position="167"/>
        <end position="169"/>
    </location>
</feature>
<feature type="strand" evidence="8">
    <location>
        <begin position="174"/>
        <end position="180"/>
    </location>
</feature>
<feature type="strand" evidence="8">
    <location>
        <begin position="183"/>
        <end position="189"/>
    </location>
</feature>
<feature type="strand" evidence="8">
    <location>
        <begin position="192"/>
        <end position="195"/>
    </location>
</feature>
<feature type="strand" evidence="8">
    <location>
        <begin position="197"/>
        <end position="201"/>
    </location>
</feature>
<feature type="helix" evidence="8">
    <location>
        <begin position="204"/>
        <end position="206"/>
    </location>
</feature>
<feature type="helix" evidence="8">
    <location>
        <begin position="207"/>
        <end position="212"/>
    </location>
</feature>
<feature type="turn" evidence="8">
    <location>
        <begin position="213"/>
        <end position="215"/>
    </location>
</feature>
<feature type="strand" evidence="8">
    <location>
        <begin position="221"/>
        <end position="231"/>
    </location>
</feature>
<feature type="helix" evidence="8">
    <location>
        <begin position="234"/>
        <end position="236"/>
    </location>
</feature>
<feature type="turn" evidence="8">
    <location>
        <begin position="237"/>
        <end position="239"/>
    </location>
</feature>
<feature type="turn" evidence="8">
    <location>
        <begin position="242"/>
        <end position="244"/>
    </location>
</feature>
<feature type="strand" evidence="8">
    <location>
        <begin position="250"/>
        <end position="253"/>
    </location>
</feature>
<feature type="helix" evidence="8">
    <location>
        <begin position="254"/>
        <end position="256"/>
    </location>
</feature>
<feature type="strand" evidence="8">
    <location>
        <begin position="258"/>
        <end position="263"/>
    </location>
</feature>
<feature type="strand" evidence="8">
    <location>
        <begin position="266"/>
        <end position="271"/>
    </location>
</feature>
<feature type="helix" evidence="8">
    <location>
        <begin position="281"/>
        <end position="283"/>
    </location>
</feature>
<feature type="helix" evidence="8">
    <location>
        <begin position="289"/>
        <end position="291"/>
    </location>
</feature>
<feature type="helix" evidence="8">
    <location>
        <begin position="305"/>
        <end position="318"/>
    </location>
</feature>
<feature type="helix" evidence="8">
    <location>
        <begin position="320"/>
        <end position="324"/>
    </location>
</feature>
<feature type="strand" evidence="8">
    <location>
        <begin position="327"/>
        <end position="337"/>
    </location>
</feature>
<feature type="strand" evidence="8">
    <location>
        <begin position="344"/>
        <end position="347"/>
    </location>
</feature>
<feature type="strand" evidence="8">
    <location>
        <begin position="349"/>
        <end position="352"/>
    </location>
</feature>
<feature type="strand" evidence="8">
    <location>
        <begin position="354"/>
        <end position="359"/>
    </location>
</feature>
<feature type="helix" evidence="8">
    <location>
        <begin position="362"/>
        <end position="364"/>
    </location>
</feature>
<feature type="helix" evidence="8">
    <location>
        <begin position="365"/>
        <end position="378"/>
    </location>
</feature>
<feature type="turn" evidence="8">
    <location>
        <begin position="386"/>
        <end position="388"/>
    </location>
</feature>
<feature type="helix" evidence="8">
    <location>
        <begin position="390"/>
        <end position="392"/>
    </location>
</feature>
<feature type="helix" evidence="8">
    <location>
        <begin position="395"/>
        <end position="398"/>
    </location>
</feature>
<feature type="helix" evidence="8">
    <location>
        <begin position="400"/>
        <end position="412"/>
    </location>
</feature>
<feature type="turn" evidence="8">
    <location>
        <begin position="413"/>
        <end position="415"/>
    </location>
</feature>
<feature type="strand" evidence="8">
    <location>
        <begin position="425"/>
        <end position="427"/>
    </location>
</feature>
<feature type="helix" evidence="8">
    <location>
        <begin position="436"/>
        <end position="441"/>
    </location>
</feature>
<feature type="strand" evidence="8">
    <location>
        <begin position="444"/>
        <end position="449"/>
    </location>
</feature>
<feature type="strand" evidence="8">
    <location>
        <begin position="452"/>
        <end position="458"/>
    </location>
</feature>
<feature type="helix" evidence="8">
    <location>
        <begin position="459"/>
        <end position="467"/>
    </location>
</feature>
<feature type="helix" evidence="8">
    <location>
        <begin position="470"/>
        <end position="472"/>
    </location>
</feature>
<feature type="helix" evidence="8">
    <location>
        <begin position="479"/>
        <end position="482"/>
    </location>
</feature>
<feature type="helix" evidence="8">
    <location>
        <begin position="488"/>
        <end position="498"/>
    </location>
</feature>
<feature type="strand" evidence="8">
    <location>
        <begin position="501"/>
        <end position="504"/>
    </location>
</feature>
<feature type="strand" evidence="8">
    <location>
        <begin position="510"/>
        <end position="515"/>
    </location>
</feature>
<feature type="helix" evidence="8">
    <location>
        <begin position="518"/>
        <end position="525"/>
    </location>
</feature>
<feature type="strand" evidence="8">
    <location>
        <begin position="526"/>
        <end position="528"/>
    </location>
</feature>
<feature type="strand" evidence="8">
    <location>
        <begin position="536"/>
        <end position="543"/>
    </location>
</feature>
<feature type="strand" evidence="8">
    <location>
        <begin position="549"/>
        <end position="559"/>
    </location>
</feature>
<feature type="strand" evidence="8">
    <location>
        <begin position="562"/>
        <end position="566"/>
    </location>
</feature>
<feature type="helix" evidence="8">
    <location>
        <begin position="570"/>
        <end position="586"/>
    </location>
</feature>
<feature type="strand" evidence="8">
    <location>
        <begin position="594"/>
        <end position="597"/>
    </location>
</feature>
<feature type="helix" evidence="8">
    <location>
        <begin position="599"/>
        <end position="601"/>
    </location>
</feature>
<feature type="strand" evidence="8">
    <location>
        <begin position="602"/>
        <end position="609"/>
    </location>
</feature>
<feature type="helix" evidence="8">
    <location>
        <begin position="612"/>
        <end position="616"/>
    </location>
</feature>
<feature type="turn" evidence="8">
    <location>
        <begin position="617"/>
        <end position="619"/>
    </location>
</feature>
<feature type="turn" evidence="8">
    <location>
        <begin position="626"/>
        <end position="628"/>
    </location>
</feature>
<feature type="strand" evidence="8">
    <location>
        <begin position="633"/>
        <end position="639"/>
    </location>
</feature>
<feature type="strand" evidence="8">
    <location>
        <begin position="642"/>
        <end position="647"/>
    </location>
</feature>
<feature type="strand" evidence="8">
    <location>
        <begin position="653"/>
        <end position="662"/>
    </location>
</feature>
<feature type="helix" evidence="8">
    <location>
        <begin position="663"/>
        <end position="677"/>
    </location>
</feature>
<feature type="helix" evidence="8">
    <location>
        <begin position="678"/>
        <end position="680"/>
    </location>
</feature>
<feature type="strand" evidence="8">
    <location>
        <begin position="683"/>
        <end position="685"/>
    </location>
</feature>
<feature type="helix" evidence="8">
    <location>
        <begin position="687"/>
        <end position="696"/>
    </location>
</feature>
<feature type="turn" evidence="8">
    <location>
        <begin position="702"/>
        <end position="704"/>
    </location>
</feature>
<feature type="turn" evidence="8">
    <location>
        <begin position="712"/>
        <end position="716"/>
    </location>
</feature>
<feature type="helix" evidence="8">
    <location>
        <begin position="718"/>
        <end position="720"/>
    </location>
</feature>
<feature type="helix" evidence="8">
    <location>
        <begin position="731"/>
        <end position="734"/>
    </location>
</feature>
<feature type="turn" evidence="9">
    <location>
        <begin position="739"/>
        <end position="741"/>
    </location>
</feature>
<feature type="strand" evidence="8">
    <location>
        <begin position="743"/>
        <end position="751"/>
    </location>
</feature>
<feature type="strand" evidence="8">
    <location>
        <begin position="763"/>
        <end position="766"/>
    </location>
</feature>
<feature type="strand" evidence="8">
    <location>
        <begin position="769"/>
        <end position="773"/>
    </location>
</feature>
<feature type="strand" evidence="8">
    <location>
        <begin position="776"/>
        <end position="780"/>
    </location>
</feature>
<feature type="turn" evidence="8">
    <location>
        <begin position="781"/>
        <end position="784"/>
    </location>
</feature>
<feature type="strand" evidence="8">
    <location>
        <begin position="785"/>
        <end position="793"/>
    </location>
</feature>
<feature type="strand" evidence="8">
    <location>
        <begin position="801"/>
        <end position="806"/>
    </location>
</feature>
<feature type="strand" evidence="8">
    <location>
        <begin position="809"/>
        <end position="816"/>
    </location>
</feature>
<feature type="turn" evidence="8">
    <location>
        <begin position="826"/>
        <end position="828"/>
    </location>
</feature>
<proteinExistence type="evidence at protein level"/>
<comment type="function">
    <text evidence="2 3 4 5">Catalyzes the oxidative demethylation of N,N-dimethylglycine to yield sarcosine, formaldehyde and hydrogen peroxide. The oxidation of dimethylglycine is coupled to the synthesis of 5,10-methylenetetrahydrofolate through an unusual substrate channeling mechanism. This channeling occurs by nonbiased diffusion of the iminium intermediate through a large solvent cavity connecting active site 1 (N-terminus) and active site 2 (C-terminus). The synthesis of 5,10-methylenetetrahydrofolate (at active site 2) prevents the accumulation of formaldehyde, formed by hydrolysis of the iminium intermediate product (at active site 1). Does not oxidize sarcosine.</text>
</comment>
<comment type="catalytic activity">
    <reaction evidence="2">
        <text>N,N-dimethylglycine + O2 + H2O = sarcosine + formaldehyde + H2O2</text>
        <dbReference type="Rhea" id="RHEA:17077"/>
        <dbReference type="ChEBI" id="CHEBI:15377"/>
        <dbReference type="ChEBI" id="CHEBI:15379"/>
        <dbReference type="ChEBI" id="CHEBI:16240"/>
        <dbReference type="ChEBI" id="CHEBI:16842"/>
        <dbReference type="ChEBI" id="CHEBI:57433"/>
        <dbReference type="ChEBI" id="CHEBI:58251"/>
        <dbReference type="EC" id="1.5.3.10"/>
    </reaction>
</comment>
<comment type="catalytic activity">
    <reaction evidence="2">
        <text>N,N-dimethylglycine + (6S)-5,6,7,8-tetrahydrofolate + O2 = sarcosine + (6R)-5,10-methylene-5,6,7,8-tetrahydrofolate + H2O2</text>
        <dbReference type="Rhea" id="RHEA:45756"/>
        <dbReference type="ChEBI" id="CHEBI:15379"/>
        <dbReference type="ChEBI" id="CHEBI:15636"/>
        <dbReference type="ChEBI" id="CHEBI:16240"/>
        <dbReference type="ChEBI" id="CHEBI:57433"/>
        <dbReference type="ChEBI" id="CHEBI:57453"/>
        <dbReference type="ChEBI" id="CHEBI:58251"/>
    </reaction>
</comment>
<comment type="cofactor">
    <cofactor evidence="2 3">
        <name>FAD</name>
        <dbReference type="ChEBI" id="CHEBI:57692"/>
    </cofactor>
    <text evidence="2 3">Binds 1 FAD per subunit.</text>
</comment>
<comment type="biophysicochemical properties">
    <kinetics>
        <KM evidence="2">2 mM for N,N-dimethylglycine</KM>
    </kinetics>
    <phDependence>
        <text evidence="2">Optimum pH is 8.0-10.0.</text>
    </phDependence>
</comment>
<comment type="similarity">
    <text evidence="6">Belongs to the GcvT family.</text>
</comment>
<accession>Q9AGP8</accession>
<name>DMGO_ARTGO</name>
<reference key="1">
    <citation type="journal article" date="2001" name="Eur. J. Biochem.">
        <title>Organization of the genes involved in dimethylglycine and sarcosine degradation in Arthrobacter spp.: implications for glycine betaine catabolism.</title>
        <authorList>
            <person name="Meskys R."/>
            <person name="Harris R.J."/>
            <person name="Casaite V."/>
            <person name="Basran J."/>
            <person name="Scrutton N.S."/>
        </authorList>
    </citation>
    <scope>NUCLEOTIDE SEQUENCE [GENOMIC DNA]</scope>
    <scope>FUNCTION</scope>
    <scope>CATALYTIC ACTIVITY</scope>
    <scope>COFACTOR</scope>
    <scope>BIOPHYSICOCHEMICAL PROPERTIES</scope>
    <source>
        <strain>NRRL B-2979</strain>
    </source>
</reference>
<reference key="2">
    <citation type="journal article" date="2002" name="Biochemistry">
        <title>Mechanistic aspects of the covalent flavoprotein dimethylglycine oxidase of Arthrobacter globiformis studied by stopped-flow spectrophotometry.</title>
        <authorList>
            <person name="Basran J."/>
            <person name="Bhanji N."/>
            <person name="Basran A."/>
            <person name="Nietlispach D."/>
            <person name="Mistry S."/>
            <person name="Meskys R."/>
            <person name="Scrutton N.S."/>
        </authorList>
    </citation>
    <scope>PROTEIN SEQUENCE OF 27-58</scope>
    <scope>FUNCTION</scope>
    <scope>FAD-BINDING AT HIS-48</scope>
    <source>
        <strain>NRRL B-2979</strain>
    </source>
</reference>
<reference key="3">
    <citation type="journal article" date="2003" name="EMBO J.">
        <title>Channelling and formation of 'active' formaldehyde in dimethylglycine oxidase.</title>
        <authorList>
            <person name="Leys D."/>
            <person name="Basran J."/>
            <person name="Scrutton N.S."/>
        </authorList>
    </citation>
    <scope>X-RAY CRYSTALLOGRAPHY (1.61 ANGSTROMS) IN COMPLEX WITH FAD AND TETRAHYDROFOLATE</scope>
    <scope>FUNCTION</scope>
    <scope>MUTAGENESIS OF HIS-225 AND TYR-259</scope>
    <source>
        <strain>NRRL B-2979</strain>
    </source>
</reference>
<reference key="4">
    <citation type="journal article" date="2009" name="J. Biol. Chem.">
        <title>An internal reaction chamber in dimethylglycine oxidase provides efficient protection from exposure to toxic formaldehyde.</title>
        <authorList>
            <person name="Tralau T."/>
            <person name="Lafite P."/>
            <person name="Levy C."/>
            <person name="Combe J.P."/>
            <person name="Scrutton N.S."/>
            <person name="Leys D."/>
        </authorList>
    </citation>
    <scope>X-RAY CRYSTALLOGRAPHY (2.00 ANGSTROMS) OF 4-830 IN COMPLEX WITH FAD AND TETRAHYDROFOLATE</scope>
    <scope>FUNCTION</scope>
    <scope>MUTAGENESIS OF ASP-552</scope>
    <source>
        <strain>NRRL B-2979</strain>
    </source>
</reference>
<keyword id="KW-0002">3D-structure</keyword>
<keyword id="KW-0903">Direct protein sequencing</keyword>
<keyword id="KW-0274">FAD</keyword>
<keyword id="KW-0285">Flavoprotein</keyword>
<keyword id="KW-0547">Nucleotide-binding</keyword>
<keyword id="KW-0560">Oxidoreductase</keyword>
<evidence type="ECO:0000255" key="1"/>
<evidence type="ECO:0000269" key="2">
    <source>
    </source>
</evidence>
<evidence type="ECO:0000269" key="3">
    <source>
    </source>
</evidence>
<evidence type="ECO:0000269" key="4">
    <source>
    </source>
</evidence>
<evidence type="ECO:0000269" key="5">
    <source>
    </source>
</evidence>
<evidence type="ECO:0000305" key="6"/>
<evidence type="ECO:0000305" key="7">
    <source>
    </source>
</evidence>
<evidence type="ECO:0007829" key="8">
    <source>
        <dbReference type="PDB" id="1PJ5"/>
    </source>
</evidence>
<evidence type="ECO:0007829" key="9">
    <source>
        <dbReference type="PDB" id="3GSI"/>
    </source>
</evidence>
<gene>
    <name type="primary">dmg</name>
</gene>
<dbReference type="EC" id="1.5.3.10"/>
<dbReference type="EMBL" id="AF329477">
    <property type="protein sequence ID" value="AAK16482.1"/>
    <property type="molecule type" value="Genomic_DNA"/>
</dbReference>
<dbReference type="PDB" id="1PJ5">
    <property type="method" value="X-ray"/>
    <property type="resolution" value="1.61 A"/>
    <property type="chains" value="A=1-830"/>
</dbReference>
<dbReference type="PDB" id="1PJ6">
    <property type="method" value="X-ray"/>
    <property type="resolution" value="1.65 A"/>
    <property type="chains" value="A=1-830"/>
</dbReference>
<dbReference type="PDB" id="1PJ7">
    <property type="method" value="X-ray"/>
    <property type="resolution" value="2.10 A"/>
    <property type="chains" value="A=1-830"/>
</dbReference>
<dbReference type="PDB" id="3GSI">
    <property type="method" value="X-ray"/>
    <property type="resolution" value="2.00 A"/>
    <property type="chains" value="A=4-830"/>
</dbReference>
<dbReference type="PDBsum" id="1PJ5"/>
<dbReference type="PDBsum" id="1PJ6"/>
<dbReference type="PDBsum" id="1PJ7"/>
<dbReference type="PDBsum" id="3GSI"/>
<dbReference type="SMR" id="Q9AGP8"/>
<dbReference type="DrugBank" id="DB03256">
    <property type="generic name" value="(6R)-Folinic acid"/>
</dbReference>
<dbReference type="DrugBank" id="DB03147">
    <property type="generic name" value="Flavin adenine dinucleotide"/>
</dbReference>
<dbReference type="KEGG" id="ag:AAK16482"/>
<dbReference type="BioCyc" id="MetaCyc:MONOMER-21836"/>
<dbReference type="BRENDA" id="1.5.3.10">
    <property type="organism ID" value="444"/>
</dbReference>
<dbReference type="SABIO-RK" id="Q9AGP8"/>
<dbReference type="EvolutionaryTrace" id="Q9AGP8"/>
<dbReference type="GO" id="GO:0047866">
    <property type="term" value="F:dimethylglycine oxidase activity"/>
    <property type="evidence" value="ECO:0007669"/>
    <property type="project" value="UniProtKB-EC"/>
</dbReference>
<dbReference type="GO" id="GO:0000166">
    <property type="term" value="F:nucleotide binding"/>
    <property type="evidence" value="ECO:0007669"/>
    <property type="project" value="UniProtKB-KW"/>
</dbReference>
<dbReference type="Gene3D" id="2.40.30.110">
    <property type="entry name" value="Aminomethyltransferase beta-barrel domains"/>
    <property type="match status" value="1"/>
</dbReference>
<dbReference type="Gene3D" id="3.30.70.1400">
    <property type="entry name" value="Aminomethyltransferase beta-barrel domains"/>
    <property type="match status" value="1"/>
</dbReference>
<dbReference type="Gene3D" id="3.30.9.10">
    <property type="entry name" value="D-Amino Acid Oxidase, subunit A, domain 2"/>
    <property type="match status" value="1"/>
</dbReference>
<dbReference type="Gene3D" id="3.50.50.60">
    <property type="entry name" value="FAD/NAD(P)-binding domain"/>
    <property type="match status" value="1"/>
</dbReference>
<dbReference type="Gene3D" id="3.30.1360.120">
    <property type="entry name" value="Probable tRNA modification gtpase trme, domain 1"/>
    <property type="match status" value="1"/>
</dbReference>
<dbReference type="InterPro" id="IPR006076">
    <property type="entry name" value="FAD-dep_OxRdtase"/>
</dbReference>
<dbReference type="InterPro" id="IPR036188">
    <property type="entry name" value="FAD/NAD-bd_sf"/>
</dbReference>
<dbReference type="InterPro" id="IPR032503">
    <property type="entry name" value="FAO_M"/>
</dbReference>
<dbReference type="InterPro" id="IPR013977">
    <property type="entry name" value="GCST_C"/>
</dbReference>
<dbReference type="InterPro" id="IPR006222">
    <property type="entry name" value="GCV_T_N"/>
</dbReference>
<dbReference type="InterPro" id="IPR028896">
    <property type="entry name" value="GcvT/YgfZ/DmdA"/>
</dbReference>
<dbReference type="InterPro" id="IPR029043">
    <property type="entry name" value="GcvT/YgfZ_C"/>
</dbReference>
<dbReference type="InterPro" id="IPR027266">
    <property type="entry name" value="TrmE/GcvT_dom1"/>
</dbReference>
<dbReference type="PANTHER" id="PTHR43757">
    <property type="entry name" value="AMINOMETHYLTRANSFERASE"/>
    <property type="match status" value="1"/>
</dbReference>
<dbReference type="PANTHER" id="PTHR43757:SF11">
    <property type="entry name" value="SARCOSINE DEHYDROGENASE"/>
    <property type="match status" value="1"/>
</dbReference>
<dbReference type="Pfam" id="PF01266">
    <property type="entry name" value="DAO"/>
    <property type="match status" value="1"/>
</dbReference>
<dbReference type="Pfam" id="PF16350">
    <property type="entry name" value="FAO_M"/>
    <property type="match status" value="1"/>
</dbReference>
<dbReference type="Pfam" id="PF01571">
    <property type="entry name" value="GCV_T"/>
    <property type="match status" value="1"/>
</dbReference>
<dbReference type="Pfam" id="PF08669">
    <property type="entry name" value="GCV_T_C"/>
    <property type="match status" value="1"/>
</dbReference>
<dbReference type="SUPFAM" id="SSF101790">
    <property type="entry name" value="Aminomethyltransferase beta-barrel domain"/>
    <property type="match status" value="1"/>
</dbReference>
<dbReference type="SUPFAM" id="SSF54373">
    <property type="entry name" value="FAD-linked reductases, C-terminal domain"/>
    <property type="match status" value="1"/>
</dbReference>
<dbReference type="SUPFAM" id="SSF51905">
    <property type="entry name" value="FAD/NAD(P)-binding domain"/>
    <property type="match status" value="1"/>
</dbReference>
<dbReference type="SUPFAM" id="SSF103025">
    <property type="entry name" value="Folate-binding domain"/>
    <property type="match status" value="1"/>
</dbReference>
<protein>
    <recommendedName>
        <fullName>Dimethylglycine oxidase</fullName>
        <shortName>DMGO</shortName>
        <ecNumber>1.5.3.10</ecNumber>
    </recommendedName>
</protein>
<sequence length="830" mass="89985">MASTPRIVIIGAGIVGTNLADELVTRGWNNITVLDQGPLNMPGGSTSHAPGLVFQTNPSKTMASFAKYTVEKLLSLTEDGVSCFNQVGGLEVATTETRLADLKRKLGYAAAWGIEGRLLSPAECQELYPLLDGENILGGLHVPSDGLASAARAVQLLIKRTESAGVTYRGSTTVTGIEQSGGRVTGVQTADGVIPADIVVSCAGFWGAKIGAMIGMAVPLLPLAHQYVKTTPVPAQQGRNDQPNGARLPILRHQDQDLYYREHGDRYGIGSYAHRPMPVDVDTLGAYAPETVSEHHMPSRLDFTLEDFLPAWEATKQLLPALADSEIEDGFNGIFSFTPDGGPLLGESKELDGFYVAEAVWVTHSAGVAKAMAELLTTGRSETDLGECDITRFEDVQLTPEYVSETSQQNFVEIYDVLHPLQPRLSPRNLRVSPFHARHKELGAFFLEAGGWERPYWFEANAALLKEMPAEWLPPARDAWSGMFSSPIAAAEAWKTRTAVAMYDMTPLKRLEVSGPGALKLLQELTTADLAKKPGAVTYTLLLDHAGGVRSDITVARLSEDTFQLGANGNIDTAYFERAARHQTQSGSATDWVQVRDTTGGTCCIGLWGPLARDLVSKVSDDDFTNDGLKYFRAKNVVIGGIPVTAMRLSYVGELGWELYTSADNGQRLWDALWQAGQPFGVIAAGRAAFSSLRLEKGYRSWGTDMTTEHDPFEAGLGFAVKMAKESFIGKGALEGRTEEASARRLRCLTIDDGRSIVLGKEPVFYKEQAVGYVTSAAYGYTVAKPIAYSYLPGTVSVGDSVDIEYFGRRITATVTEDPLYDPKMTRLRG</sequence>